<evidence type="ECO:0000250" key="1"/>
<evidence type="ECO:0000255" key="2"/>
<evidence type="ECO:0000269" key="3">
    <source>
    </source>
</evidence>
<evidence type="ECO:0000269" key="4">
    <source>
    </source>
</evidence>
<evidence type="ECO:0000303" key="5">
    <source>
    </source>
</evidence>
<evidence type="ECO:0000305" key="6"/>
<evidence type="ECO:0000305" key="7">
    <source>
    </source>
</evidence>
<name>APK4_ARATH</name>
<protein>
    <recommendedName>
        <fullName>Adenylyl-sulfate kinase 4, chloroplastic</fullName>
        <ecNumber evidence="7">2.7.1.25</ecNumber>
    </recommendedName>
    <alternativeName>
        <fullName>ATP adenosine-5'-phosphosulfate 3'-phosphotransferase 4</fullName>
    </alternativeName>
    <alternativeName>
        <fullName evidence="5">Adenosine-5'-phosphosulfate kinase 4</fullName>
        <shortName evidence="5">APS kinase 4</shortName>
    </alternativeName>
</protein>
<comment type="function">
    <text evidence="3 4">Catalyzes the phosphorylation of adenosine 5'-phosphosulfate to 3'-phosphoadenylyl sulfate, which is the activated sulfate form for sulfation reactions. Essential for plant reproduction and viability.</text>
</comment>
<comment type="catalytic activity">
    <reaction evidence="7">
        <text>adenosine 5'-phosphosulfate + ATP = 3'-phosphoadenylyl sulfate + ADP + H(+)</text>
        <dbReference type="Rhea" id="RHEA:24152"/>
        <dbReference type="ChEBI" id="CHEBI:15378"/>
        <dbReference type="ChEBI" id="CHEBI:30616"/>
        <dbReference type="ChEBI" id="CHEBI:58243"/>
        <dbReference type="ChEBI" id="CHEBI:58339"/>
        <dbReference type="ChEBI" id="CHEBI:456216"/>
        <dbReference type="EC" id="2.7.1.25"/>
    </reaction>
    <physiologicalReaction direction="left-to-right" evidence="7">
        <dbReference type="Rhea" id="RHEA:24153"/>
    </physiologicalReaction>
</comment>
<comment type="biophysicochemical properties">
    <kinetics>
        <KM evidence="3">2.1 uM for adenosine 5'-phosphosulfate</KM>
        <Vmax evidence="3">12.7 mmol/min/mg enzyme with adenosine 5'-phosphosulfate as substrate</Vmax>
    </kinetics>
</comment>
<comment type="pathway">
    <text>Sulfur metabolism; hydrogen sulfide biosynthesis; sulfite from sulfate: step 2/3.</text>
</comment>
<comment type="subunit">
    <text evidence="1">Homodimer; disulfide-linked.</text>
</comment>
<comment type="interaction">
    <interactant intactId="EBI-25520113">
        <id>Q84JF0</id>
    </interactant>
    <interactant intactId="EBI-4431481">
        <id>Q9FFS3</id>
        <label>WRKY24</label>
    </interactant>
    <organismsDiffer>false</organismsDiffer>
    <experiments>3</experiments>
</comment>
<comment type="subcellular location">
    <subcellularLocation>
        <location evidence="3">Plastid</location>
        <location evidence="3">Chloroplast</location>
    </subcellularLocation>
</comment>
<comment type="tissue specificity">
    <text evidence="3">Expressed in root vasculature, root tips, leaf epidermal and guard cells, pollen grains and radicle of immature seeds.</text>
</comment>
<comment type="disruption phenotype">
    <text evidence="3">No visible phenotype under normal growth conditions.</text>
</comment>
<comment type="similarity">
    <text evidence="6">Belongs to the APS kinase family.</text>
</comment>
<comment type="sequence caution" evidence="6">
    <conflict type="erroneous initiation">
        <sequence resource="EMBL-CDS" id="AAM61589"/>
    </conflict>
    <text>Truncated N-terminus.</text>
</comment>
<comment type="sequence caution" evidence="6">
    <conflict type="erroneous gene model prediction">
        <sequence resource="EMBL-CDS" id="BAB08460"/>
    </conflict>
</comment>
<organism>
    <name type="scientific">Arabidopsis thaliana</name>
    <name type="common">Mouse-ear cress</name>
    <dbReference type="NCBI Taxonomy" id="3702"/>
    <lineage>
        <taxon>Eukaryota</taxon>
        <taxon>Viridiplantae</taxon>
        <taxon>Streptophyta</taxon>
        <taxon>Embryophyta</taxon>
        <taxon>Tracheophyta</taxon>
        <taxon>Spermatophyta</taxon>
        <taxon>Magnoliopsida</taxon>
        <taxon>eudicotyledons</taxon>
        <taxon>Gunneridae</taxon>
        <taxon>Pentapetalae</taxon>
        <taxon>rosids</taxon>
        <taxon>malvids</taxon>
        <taxon>Brassicales</taxon>
        <taxon>Brassicaceae</taxon>
        <taxon>Camelineae</taxon>
        <taxon>Arabidopsis</taxon>
    </lineage>
</organism>
<dbReference type="EC" id="2.7.1.25" evidence="7"/>
<dbReference type="EMBL" id="AB013390">
    <property type="protein sequence ID" value="BAB08460.1"/>
    <property type="status" value="ALT_SEQ"/>
    <property type="molecule type" value="Genomic_DNA"/>
</dbReference>
<dbReference type="EMBL" id="CP002688">
    <property type="protein sequence ID" value="AED98355.1"/>
    <property type="molecule type" value="Genomic_DNA"/>
</dbReference>
<dbReference type="EMBL" id="BT003977">
    <property type="protein sequence ID" value="AAO42019.1"/>
    <property type="molecule type" value="mRNA"/>
</dbReference>
<dbReference type="EMBL" id="BT005193">
    <property type="protein sequence ID" value="AAO50726.1"/>
    <property type="molecule type" value="mRNA"/>
</dbReference>
<dbReference type="EMBL" id="AY085031">
    <property type="protein sequence ID" value="AAM61589.1"/>
    <property type="status" value="ALT_INIT"/>
    <property type="molecule type" value="mRNA"/>
</dbReference>
<dbReference type="RefSeq" id="NP_569050.1">
    <property type="nucleotide sequence ID" value="NM_126152.5"/>
</dbReference>
<dbReference type="SMR" id="Q84JF0"/>
<dbReference type="BioGRID" id="22130">
    <property type="interactions" value="1"/>
</dbReference>
<dbReference type="FunCoup" id="Q84JF0">
    <property type="interactions" value="26"/>
</dbReference>
<dbReference type="IntAct" id="Q84JF0">
    <property type="interactions" value="1"/>
</dbReference>
<dbReference type="STRING" id="3702.Q84JF0"/>
<dbReference type="PaxDb" id="3702-AT5G67520.1"/>
<dbReference type="ProteomicsDB" id="244475"/>
<dbReference type="EnsemblPlants" id="AT5G67520.1">
    <property type="protein sequence ID" value="AT5G67520.1"/>
    <property type="gene ID" value="AT5G67520"/>
</dbReference>
<dbReference type="GeneID" id="836888"/>
<dbReference type="Gramene" id="AT5G67520.1">
    <property type="protein sequence ID" value="AT5G67520.1"/>
    <property type="gene ID" value="AT5G67520"/>
</dbReference>
<dbReference type="KEGG" id="ath:AT5G67520"/>
<dbReference type="Araport" id="AT5G67520"/>
<dbReference type="TAIR" id="AT5G67520">
    <property type="gene designation" value="APK4"/>
</dbReference>
<dbReference type="eggNOG" id="KOG0635">
    <property type="taxonomic scope" value="Eukaryota"/>
</dbReference>
<dbReference type="HOGENOM" id="CLU_046932_0_2_1"/>
<dbReference type="InParanoid" id="Q84JF0"/>
<dbReference type="OMA" id="NIVWHSC"/>
<dbReference type="OrthoDB" id="506431at2759"/>
<dbReference type="PhylomeDB" id="Q84JF0"/>
<dbReference type="BioCyc" id="ARA:AT5G67520-MONOMER"/>
<dbReference type="SABIO-RK" id="Q84JF0"/>
<dbReference type="UniPathway" id="UPA00140">
    <property type="reaction ID" value="UER00205"/>
</dbReference>
<dbReference type="PRO" id="PR:Q84JF0"/>
<dbReference type="Proteomes" id="UP000006548">
    <property type="component" value="Chromosome 5"/>
</dbReference>
<dbReference type="ExpressionAtlas" id="Q84JF0">
    <property type="expression patterns" value="baseline and differential"/>
</dbReference>
<dbReference type="GO" id="GO:0009507">
    <property type="term" value="C:chloroplast"/>
    <property type="evidence" value="ECO:0000314"/>
    <property type="project" value="TAIR"/>
</dbReference>
<dbReference type="GO" id="GO:0005829">
    <property type="term" value="C:cytosol"/>
    <property type="evidence" value="ECO:0000314"/>
    <property type="project" value="UniProtKB"/>
</dbReference>
<dbReference type="GO" id="GO:0009536">
    <property type="term" value="C:plastid"/>
    <property type="evidence" value="ECO:0000304"/>
    <property type="project" value="TAIR"/>
</dbReference>
<dbReference type="GO" id="GO:0004020">
    <property type="term" value="F:adenylylsulfate kinase activity"/>
    <property type="evidence" value="ECO:0000314"/>
    <property type="project" value="UniProtKB"/>
</dbReference>
<dbReference type="GO" id="GO:0005524">
    <property type="term" value="F:ATP binding"/>
    <property type="evidence" value="ECO:0007669"/>
    <property type="project" value="UniProtKB-KW"/>
</dbReference>
<dbReference type="GO" id="GO:0019344">
    <property type="term" value="P:cysteine biosynthetic process"/>
    <property type="evidence" value="ECO:0007669"/>
    <property type="project" value="UniProtKB-KW"/>
</dbReference>
<dbReference type="GO" id="GO:0070814">
    <property type="term" value="P:hydrogen sulfide biosynthetic process"/>
    <property type="evidence" value="ECO:0007669"/>
    <property type="project" value="UniProtKB-UniPathway"/>
</dbReference>
<dbReference type="GO" id="GO:0000103">
    <property type="term" value="P:sulfate assimilation"/>
    <property type="evidence" value="ECO:0007669"/>
    <property type="project" value="InterPro"/>
</dbReference>
<dbReference type="CDD" id="cd02027">
    <property type="entry name" value="APSK"/>
    <property type="match status" value="1"/>
</dbReference>
<dbReference type="Gene3D" id="3.40.50.300">
    <property type="entry name" value="P-loop containing nucleotide triphosphate hydrolases"/>
    <property type="match status" value="1"/>
</dbReference>
<dbReference type="HAMAP" id="MF_00065">
    <property type="entry name" value="Adenylyl_sulf_kinase"/>
    <property type="match status" value="1"/>
</dbReference>
<dbReference type="InterPro" id="IPR002891">
    <property type="entry name" value="APS_kinase"/>
</dbReference>
<dbReference type="InterPro" id="IPR027417">
    <property type="entry name" value="P-loop_NTPase"/>
</dbReference>
<dbReference type="NCBIfam" id="TIGR00455">
    <property type="entry name" value="apsK"/>
    <property type="match status" value="1"/>
</dbReference>
<dbReference type="NCBIfam" id="NF003013">
    <property type="entry name" value="PRK03846.1"/>
    <property type="match status" value="1"/>
</dbReference>
<dbReference type="PANTHER" id="PTHR11055:SF44">
    <property type="entry name" value="ADENYLYL-SULFATE KINASE 4, CHLOROPLASTIC"/>
    <property type="match status" value="1"/>
</dbReference>
<dbReference type="PANTHER" id="PTHR11055">
    <property type="entry name" value="BIFUNCTIONAL 3'-PHOSPHOADENOSINE 5'-PHOSPHOSULFATE SYNTHASE"/>
    <property type="match status" value="1"/>
</dbReference>
<dbReference type="Pfam" id="PF01583">
    <property type="entry name" value="APS_kinase"/>
    <property type="match status" value="1"/>
</dbReference>
<dbReference type="SUPFAM" id="SSF52540">
    <property type="entry name" value="P-loop containing nucleoside triphosphate hydrolases"/>
    <property type="match status" value="1"/>
</dbReference>
<gene>
    <name type="primary">APK4</name>
    <name type="ordered locus">At5g67520</name>
    <name type="ORF">K9I9.8</name>
</gene>
<accession>Q84JF0</accession>
<accession>Q8LF64</accession>
<accession>Q9FJX1</accession>
<proteinExistence type="evidence at protein level"/>
<reference key="1">
    <citation type="journal article" date="1998" name="DNA Res.">
        <title>Structural analysis of Arabidopsis thaliana chromosome 5. VI. Sequence features of the regions of 1,367,185 bp covered by 19 physically assigned P1 and TAC clones.</title>
        <authorList>
            <person name="Kotani H."/>
            <person name="Nakamura Y."/>
            <person name="Sato S."/>
            <person name="Asamizu E."/>
            <person name="Kaneko T."/>
            <person name="Miyajima N."/>
            <person name="Tabata S."/>
        </authorList>
    </citation>
    <scope>NUCLEOTIDE SEQUENCE [LARGE SCALE GENOMIC DNA]</scope>
    <source>
        <strain>cv. Columbia</strain>
    </source>
</reference>
<reference key="2">
    <citation type="journal article" date="2017" name="Plant J.">
        <title>Araport11: a complete reannotation of the Arabidopsis thaliana reference genome.</title>
        <authorList>
            <person name="Cheng C.Y."/>
            <person name="Krishnakumar V."/>
            <person name="Chan A.P."/>
            <person name="Thibaud-Nissen F."/>
            <person name="Schobel S."/>
            <person name="Town C.D."/>
        </authorList>
    </citation>
    <scope>GENOME REANNOTATION</scope>
    <source>
        <strain>cv. Columbia</strain>
    </source>
</reference>
<reference key="3">
    <citation type="journal article" date="2003" name="Science">
        <title>Empirical analysis of transcriptional activity in the Arabidopsis genome.</title>
        <authorList>
            <person name="Yamada K."/>
            <person name="Lim J."/>
            <person name="Dale J.M."/>
            <person name="Chen H."/>
            <person name="Shinn P."/>
            <person name="Palm C.J."/>
            <person name="Southwick A.M."/>
            <person name="Wu H.C."/>
            <person name="Kim C.J."/>
            <person name="Nguyen M."/>
            <person name="Pham P.K."/>
            <person name="Cheuk R.F."/>
            <person name="Karlin-Newmann G."/>
            <person name="Liu S.X."/>
            <person name="Lam B."/>
            <person name="Sakano H."/>
            <person name="Wu T."/>
            <person name="Yu G."/>
            <person name="Miranda M."/>
            <person name="Quach H.L."/>
            <person name="Tripp M."/>
            <person name="Chang C.H."/>
            <person name="Lee J.M."/>
            <person name="Toriumi M.J."/>
            <person name="Chan M.M."/>
            <person name="Tang C.C."/>
            <person name="Onodera C.S."/>
            <person name="Deng J.M."/>
            <person name="Akiyama K."/>
            <person name="Ansari Y."/>
            <person name="Arakawa T."/>
            <person name="Banh J."/>
            <person name="Banno F."/>
            <person name="Bowser L."/>
            <person name="Brooks S.Y."/>
            <person name="Carninci P."/>
            <person name="Chao Q."/>
            <person name="Choy N."/>
            <person name="Enju A."/>
            <person name="Goldsmith A.D."/>
            <person name="Gurjal M."/>
            <person name="Hansen N.F."/>
            <person name="Hayashizaki Y."/>
            <person name="Johnson-Hopson C."/>
            <person name="Hsuan V.W."/>
            <person name="Iida K."/>
            <person name="Karnes M."/>
            <person name="Khan S."/>
            <person name="Koesema E."/>
            <person name="Ishida J."/>
            <person name="Jiang P.X."/>
            <person name="Jones T."/>
            <person name="Kawai J."/>
            <person name="Kamiya A."/>
            <person name="Meyers C."/>
            <person name="Nakajima M."/>
            <person name="Narusaka M."/>
            <person name="Seki M."/>
            <person name="Sakurai T."/>
            <person name="Satou M."/>
            <person name="Tamse R."/>
            <person name="Vaysberg M."/>
            <person name="Wallender E.K."/>
            <person name="Wong C."/>
            <person name="Yamamura Y."/>
            <person name="Yuan S."/>
            <person name="Shinozaki K."/>
            <person name="Davis R.W."/>
            <person name="Theologis A."/>
            <person name="Ecker J.R."/>
        </authorList>
    </citation>
    <scope>NUCLEOTIDE SEQUENCE [LARGE SCALE MRNA]</scope>
    <source>
        <strain>cv. Columbia</strain>
    </source>
</reference>
<reference key="4">
    <citation type="submission" date="2002-03" db="EMBL/GenBank/DDBJ databases">
        <title>Full-length cDNA from Arabidopsis thaliana.</title>
        <authorList>
            <person name="Brover V.V."/>
            <person name="Troukhan M.E."/>
            <person name="Alexandrov N.A."/>
            <person name="Lu Y.-P."/>
            <person name="Flavell R.B."/>
            <person name="Feldmann K.A."/>
        </authorList>
    </citation>
    <scope>NUCLEOTIDE SEQUENCE [LARGE SCALE MRNA]</scope>
</reference>
<reference key="5">
    <citation type="journal article" date="2009" name="Plant Cell">
        <title>Disruption of adenosine-5'-phosphosulfate kinase in Arabidopsis reduces levels of sulfated secondary metabolites.</title>
        <authorList>
            <person name="Mugford S.G."/>
            <person name="Yoshimoto N."/>
            <person name="Reichelt M."/>
            <person name="Wirtz M."/>
            <person name="Hill L."/>
            <person name="Mugford S.T."/>
            <person name="Nakazato Y."/>
            <person name="Noji M."/>
            <person name="Takahashi H."/>
            <person name="Kramell R."/>
            <person name="Gigolashvili T."/>
            <person name="Fluegge U.I."/>
            <person name="Wasternack C."/>
            <person name="Gershenzon J."/>
            <person name="Hell R."/>
            <person name="Saito K."/>
            <person name="Kopriva S."/>
        </authorList>
    </citation>
    <scope>FUNCTION</scope>
    <scope>CATALYTIC ACTIVITY</scope>
    <scope>BIOPHYSICOCHEMICAL PROPERTIES</scope>
    <scope>SUBCELLULAR LOCATION</scope>
    <scope>TISSUE SPECIFICITY</scope>
    <scope>DISRUPTION PHENOTYPE</scope>
</reference>
<reference key="6">
    <citation type="journal article" date="2010" name="FEBS Lett.">
        <title>Adenosine-5'-phosphosulfate kinase is essential for Arabidopsis viability.</title>
        <authorList>
            <person name="Mugford S.G."/>
            <person name="Matthewman C.A."/>
            <person name="Hill L."/>
            <person name="Kopriva S."/>
        </authorList>
    </citation>
    <scope>FUNCTION</scope>
</reference>
<feature type="transit peptide" description="Chloroplast" evidence="2">
    <location>
        <begin position="1"/>
        <end position="75"/>
    </location>
</feature>
<feature type="chain" id="PRO_0000424067" description="Adenylyl-sulfate kinase 4, chloroplastic">
    <location>
        <begin position="76"/>
        <end position="310"/>
    </location>
</feature>
<feature type="active site" description="Phosphoserine intermediate" evidence="1">
    <location>
        <position position="190"/>
    </location>
</feature>
<feature type="binding site" evidence="1">
    <location>
        <begin position="116"/>
        <end position="124"/>
    </location>
    <ligand>
        <name>ATP</name>
        <dbReference type="ChEBI" id="CHEBI:30616"/>
    </ligand>
</feature>
<feature type="binding site" evidence="1">
    <location>
        <position position="146"/>
    </location>
    <ligand>
        <name>substrate</name>
    </ligand>
</feature>
<feature type="binding site" evidence="1">
    <location>
        <position position="149"/>
    </location>
    <ligand>
        <name>substrate</name>
    </ligand>
</feature>
<feature type="binding site" evidence="1">
    <location>
        <position position="163"/>
    </location>
    <ligand>
        <name>substrate</name>
    </ligand>
</feature>
<feature type="binding site" evidence="1">
    <location>
        <position position="166"/>
    </location>
    <ligand>
        <name>substrate</name>
    </ligand>
</feature>
<feature type="binding site" evidence="1">
    <location>
        <begin position="189"/>
        <end position="190"/>
    </location>
    <ligand>
        <name>substrate</name>
    </ligand>
</feature>
<feature type="binding site" evidence="1">
    <location>
        <position position="239"/>
    </location>
    <ligand>
        <name>substrate</name>
    </ligand>
</feature>
<feature type="site" description="Participates in a stacking interaction with the adenine ring of adenylyl-sulfate" evidence="1">
    <location>
        <position position="158"/>
    </location>
</feature>
<feature type="disulfide bond" description="Interchain (with C-127)" evidence="1">
    <location>
        <position position="94"/>
    </location>
</feature>
<feature type="disulfide bond" description="Interchain (with C-94)" evidence="1">
    <location>
        <position position="127"/>
    </location>
</feature>
<feature type="sequence conflict" description="In Ref. 4; AAM61589." evidence="6" ref="4">
    <original>Q</original>
    <variation>H</variation>
    <location>
        <position position="107"/>
    </location>
</feature>
<feature type="sequence conflict" description="In Ref. 4; AAM61589." evidence="6" ref="4">
    <original>N</original>
    <variation>D</variation>
    <location>
        <position position="308"/>
    </location>
</feature>
<sequence length="310" mass="34065">MDVAAMARCVGRCYVSPAFGESESHRLSERRFLKLSSSTNSDPAGSKSLKLRGKIHRRMSYFRPIMAKDESISSRSGETKQINGKQKNIVWHDCPVTKSDRQELIKQKGCVIWITGLSGSGKSSLACALSRALHNRGKLSYILDGDNVRHGLNSDLSFEADDRAENIRRVGEVAKLFADSGIICIASLISPYRIERAACRALLPQGDFIEVFMDVPLHVCEARDPKGLYKRARAGKIKGFTGVDDPYEAPLDCEIVIQNSRDKGLSSSSSSSSSPSSSSSSLCEMADIVVSYLDQNGYLKKHSTKSRNCM</sequence>
<keyword id="KW-0028">Amino-acid biosynthesis</keyword>
<keyword id="KW-0067">ATP-binding</keyword>
<keyword id="KW-0150">Chloroplast</keyword>
<keyword id="KW-0198">Cysteine biosynthesis</keyword>
<keyword id="KW-1015">Disulfide bond</keyword>
<keyword id="KW-0418">Kinase</keyword>
<keyword id="KW-0547">Nucleotide-binding</keyword>
<keyword id="KW-0934">Plastid</keyword>
<keyword id="KW-1185">Reference proteome</keyword>
<keyword id="KW-0808">Transferase</keyword>
<keyword id="KW-0809">Transit peptide</keyword>